<comment type="subcellular location">
    <subcellularLocation>
        <location evidence="3">Membrane</location>
        <topology evidence="3">Single-pass membrane protein</topology>
    </subcellularLocation>
</comment>
<proteinExistence type="evidence at transcript level"/>
<sequence>MALTPTNLNNKMSLQMKMDCQEQQLTKKNNGFFQKLNVTEGAMQDLLKEIIKVDHILDRSDDEDDISSENPQTDFLHKGMLELEAEHDQDLSKQDKQETDVDEDPQASTSLQFSKKNLLELCLKGMFLKLNYWNTKIGLQVKELGADYIDGTEKIDNIIKKINVTENTVKSLLKDMLTLKGQIEKLEDRGLDLDQGTSTEVNTCNEVYELKKKVIERLEDLCKNVELLSAKLRMYQMEAEDTDSHSSEEIDTEEMEALLPQAPASFLVQKSPPRNTAWKRALRIFIMFDVLTVTGLLCYILFFGATFLFERVLLRMLGCRTTWDLREMREPFLNLEVEALLPS</sequence>
<evidence type="ECO:0000255" key="1"/>
<evidence type="ECO:0000256" key="2">
    <source>
        <dbReference type="SAM" id="MobiDB-lite"/>
    </source>
</evidence>
<evidence type="ECO:0000305" key="3"/>
<name>SMCO2_HUMAN</name>
<protein>
    <recommendedName>
        <fullName>Single-pass membrane and coiled-coil domain-containing protein 2</fullName>
    </recommendedName>
</protein>
<keyword id="KW-0175">Coiled coil</keyword>
<keyword id="KW-0472">Membrane</keyword>
<keyword id="KW-1185">Reference proteome</keyword>
<keyword id="KW-0812">Transmembrane</keyword>
<keyword id="KW-1133">Transmembrane helix</keyword>
<feature type="chain" id="PRO_0000340699" description="Single-pass membrane and coiled-coil domain-containing protein 2">
    <location>
        <begin position="1"/>
        <end position="343"/>
    </location>
</feature>
<feature type="transmembrane region" description="Helical" evidence="1">
    <location>
        <begin position="284"/>
        <end position="304"/>
    </location>
</feature>
<feature type="region of interest" description="Disordered" evidence="2">
    <location>
        <begin position="86"/>
        <end position="108"/>
    </location>
</feature>
<feature type="coiled-coil region" evidence="1">
    <location>
        <begin position="152"/>
        <end position="238"/>
    </location>
</feature>
<feature type="compositionally biased region" description="Basic and acidic residues" evidence="2">
    <location>
        <begin position="86"/>
        <end position="99"/>
    </location>
</feature>
<feature type="sequence conflict" description="In Ref. 2; DY654457." evidence="3" ref="2">
    <original>K</original>
    <variation>M</variation>
    <location>
        <position position="129"/>
    </location>
</feature>
<feature type="sequence conflict" description="In Ref. 2; DY654457." evidence="3" ref="2">
    <original>T</original>
    <variation>P</variation>
    <location>
        <position position="165"/>
    </location>
</feature>
<feature type="sequence conflict" description="In Ref. 2; DY654457." evidence="3" ref="2">
    <original>D</original>
    <variation>E</variation>
    <location>
        <position position="175"/>
    </location>
</feature>
<feature type="sequence conflict" description="In Ref. 2; DY654457." evidence="3" ref="2">
    <original>K</original>
    <variation>R</variation>
    <location>
        <position position="180"/>
    </location>
</feature>
<feature type="sequence conflict" description="In Ref. 2; DY654457." evidence="3" ref="2">
    <original>ST</original>
    <variation>CA</variation>
    <location>
        <begin position="198"/>
        <end position="199"/>
    </location>
</feature>
<feature type="sequence conflict" description="In Ref. 2; DY654457." evidence="3" ref="2">
    <original>K</original>
    <variation>N</variation>
    <location>
        <position position="212"/>
    </location>
</feature>
<feature type="sequence conflict" description="In Ref. 2; DY654457." evidence="3" ref="2">
    <original>E</original>
    <variation>Q</variation>
    <location>
        <position position="216"/>
    </location>
</feature>
<reference key="1">
    <citation type="journal article" date="2006" name="Nature">
        <title>The finished DNA sequence of human chromosome 12.</title>
        <authorList>
            <person name="Scherer S.E."/>
            <person name="Muzny D.M."/>
            <person name="Buhay C.J."/>
            <person name="Chen R."/>
            <person name="Cree A."/>
            <person name="Ding Y."/>
            <person name="Dugan-Rocha S."/>
            <person name="Gill R."/>
            <person name="Gunaratne P."/>
            <person name="Harris R.A."/>
            <person name="Hawes A.C."/>
            <person name="Hernandez J."/>
            <person name="Hodgson A.V."/>
            <person name="Hume J."/>
            <person name="Jackson A."/>
            <person name="Khan Z.M."/>
            <person name="Kovar-Smith C."/>
            <person name="Lewis L.R."/>
            <person name="Lozado R.J."/>
            <person name="Metzker M.L."/>
            <person name="Milosavljevic A."/>
            <person name="Miner G.R."/>
            <person name="Montgomery K.T."/>
            <person name="Morgan M.B."/>
            <person name="Nazareth L.V."/>
            <person name="Scott G."/>
            <person name="Sodergren E."/>
            <person name="Song X.-Z."/>
            <person name="Steffen D."/>
            <person name="Lovering R.C."/>
            <person name="Wheeler D.A."/>
            <person name="Worley K.C."/>
            <person name="Yuan Y."/>
            <person name="Zhang Z."/>
            <person name="Adams C.Q."/>
            <person name="Ansari-Lari M.A."/>
            <person name="Ayele M."/>
            <person name="Brown M.J."/>
            <person name="Chen G."/>
            <person name="Chen Z."/>
            <person name="Clerc-Blankenburg K.P."/>
            <person name="Davis C."/>
            <person name="Delgado O."/>
            <person name="Dinh H.H."/>
            <person name="Draper H."/>
            <person name="Gonzalez-Garay M.L."/>
            <person name="Havlak P."/>
            <person name="Jackson L.R."/>
            <person name="Jacob L.S."/>
            <person name="Kelly S.H."/>
            <person name="Li L."/>
            <person name="Li Z."/>
            <person name="Liu J."/>
            <person name="Liu W."/>
            <person name="Lu J."/>
            <person name="Maheshwari M."/>
            <person name="Nguyen B.-V."/>
            <person name="Okwuonu G.O."/>
            <person name="Pasternak S."/>
            <person name="Perez L.M."/>
            <person name="Plopper F.J.H."/>
            <person name="Santibanez J."/>
            <person name="Shen H."/>
            <person name="Tabor P.E."/>
            <person name="Verduzco D."/>
            <person name="Waldron L."/>
            <person name="Wang Q."/>
            <person name="Williams G.A."/>
            <person name="Zhang J."/>
            <person name="Zhou J."/>
            <person name="Allen C.C."/>
            <person name="Amin A.G."/>
            <person name="Anyalebechi V."/>
            <person name="Bailey M."/>
            <person name="Barbaria J.A."/>
            <person name="Bimage K.E."/>
            <person name="Bryant N.P."/>
            <person name="Burch P.E."/>
            <person name="Burkett C.E."/>
            <person name="Burrell K.L."/>
            <person name="Calderon E."/>
            <person name="Cardenas V."/>
            <person name="Carter K."/>
            <person name="Casias K."/>
            <person name="Cavazos I."/>
            <person name="Cavazos S.R."/>
            <person name="Ceasar H."/>
            <person name="Chacko J."/>
            <person name="Chan S.N."/>
            <person name="Chavez D."/>
            <person name="Christopoulos C."/>
            <person name="Chu J."/>
            <person name="Cockrell R."/>
            <person name="Cox C.D."/>
            <person name="Dang M."/>
            <person name="Dathorne S.R."/>
            <person name="David R."/>
            <person name="Davis C.M."/>
            <person name="Davy-Carroll L."/>
            <person name="Deshazo D.R."/>
            <person name="Donlin J.E."/>
            <person name="D'Souza L."/>
            <person name="Eaves K.A."/>
            <person name="Egan A."/>
            <person name="Emery-Cohen A.J."/>
            <person name="Escotto M."/>
            <person name="Flagg N."/>
            <person name="Forbes L.D."/>
            <person name="Gabisi A.M."/>
            <person name="Garza M."/>
            <person name="Hamilton C."/>
            <person name="Henderson N."/>
            <person name="Hernandez O."/>
            <person name="Hines S."/>
            <person name="Hogues M.E."/>
            <person name="Huang M."/>
            <person name="Idlebird D.G."/>
            <person name="Johnson R."/>
            <person name="Jolivet A."/>
            <person name="Jones S."/>
            <person name="Kagan R."/>
            <person name="King L.M."/>
            <person name="Leal B."/>
            <person name="Lebow H."/>
            <person name="Lee S."/>
            <person name="LeVan J.M."/>
            <person name="Lewis L.C."/>
            <person name="London P."/>
            <person name="Lorensuhewa L.M."/>
            <person name="Loulseged H."/>
            <person name="Lovett D.A."/>
            <person name="Lucier A."/>
            <person name="Lucier R.L."/>
            <person name="Ma J."/>
            <person name="Madu R.C."/>
            <person name="Mapua P."/>
            <person name="Martindale A.D."/>
            <person name="Martinez E."/>
            <person name="Massey E."/>
            <person name="Mawhiney S."/>
            <person name="Meador M.G."/>
            <person name="Mendez S."/>
            <person name="Mercado C."/>
            <person name="Mercado I.C."/>
            <person name="Merritt C.E."/>
            <person name="Miner Z.L."/>
            <person name="Minja E."/>
            <person name="Mitchell T."/>
            <person name="Mohabbat F."/>
            <person name="Mohabbat K."/>
            <person name="Montgomery B."/>
            <person name="Moore N."/>
            <person name="Morris S."/>
            <person name="Munidasa M."/>
            <person name="Ngo R.N."/>
            <person name="Nguyen N.B."/>
            <person name="Nickerson E."/>
            <person name="Nwaokelemeh O.O."/>
            <person name="Nwokenkwo S."/>
            <person name="Obregon M."/>
            <person name="Oguh M."/>
            <person name="Oragunye N."/>
            <person name="Oviedo R.J."/>
            <person name="Parish B.J."/>
            <person name="Parker D.N."/>
            <person name="Parrish J."/>
            <person name="Parks K.L."/>
            <person name="Paul H.A."/>
            <person name="Payton B.A."/>
            <person name="Perez A."/>
            <person name="Perrin W."/>
            <person name="Pickens A."/>
            <person name="Primus E.L."/>
            <person name="Pu L.-L."/>
            <person name="Puazo M."/>
            <person name="Quiles M.M."/>
            <person name="Quiroz J.B."/>
            <person name="Rabata D."/>
            <person name="Reeves K."/>
            <person name="Ruiz S.J."/>
            <person name="Shao H."/>
            <person name="Sisson I."/>
            <person name="Sonaike T."/>
            <person name="Sorelle R.P."/>
            <person name="Sutton A.E."/>
            <person name="Svatek A.F."/>
            <person name="Svetz L.A."/>
            <person name="Tamerisa K.S."/>
            <person name="Taylor T.R."/>
            <person name="Teague B."/>
            <person name="Thomas N."/>
            <person name="Thorn R.D."/>
            <person name="Trejos Z.Y."/>
            <person name="Trevino B.K."/>
            <person name="Ukegbu O.N."/>
            <person name="Urban J.B."/>
            <person name="Vasquez L.I."/>
            <person name="Vera V.A."/>
            <person name="Villasana D.M."/>
            <person name="Wang L."/>
            <person name="Ward-Moore S."/>
            <person name="Warren J.T."/>
            <person name="Wei X."/>
            <person name="White F."/>
            <person name="Williamson A.L."/>
            <person name="Wleczyk R."/>
            <person name="Wooden H.S."/>
            <person name="Wooden S.H."/>
            <person name="Yen J."/>
            <person name="Yoon L."/>
            <person name="Yoon V."/>
            <person name="Zorrilla S.E."/>
            <person name="Nelson D."/>
            <person name="Kucherlapati R."/>
            <person name="Weinstock G."/>
            <person name="Gibbs R.A."/>
        </authorList>
    </citation>
    <scope>NUCLEOTIDE SEQUENCE [LARGE SCALE GENOMIC DNA]</scope>
</reference>
<reference key="2">
    <citation type="submission" date="2006-03" db="EMBL/GenBank/DDBJ databases">
        <title>Exhaustive RT-PCR and sequencing of all novel TWINSCAN predictions in human.</title>
        <authorList>
            <person name="Stevens M."/>
            <person name="Wei C."/>
            <person name="Gross S.S."/>
            <person name="McPherson J."/>
            <person name="Brent M.R."/>
        </authorList>
    </citation>
    <scope>NUCLEOTIDE SEQUENCE [LARGE SCALE MRNA] OF 92-219</scope>
</reference>
<dbReference type="EMBL" id="AC068794">
    <property type="status" value="NOT_ANNOTATED_CDS"/>
    <property type="molecule type" value="Genomic_DNA"/>
</dbReference>
<dbReference type="EMBL" id="DY654457">
    <property type="status" value="NOT_ANNOTATED_CDS"/>
    <property type="molecule type" value="mRNA"/>
</dbReference>
<dbReference type="CCDS" id="CCDS44852.1"/>
<dbReference type="RefSeq" id="NP_001138482.1">
    <property type="nucleotide sequence ID" value="NM_001145010.3"/>
</dbReference>
<dbReference type="RefSeq" id="NP_001382137.1">
    <property type="nucleotide sequence ID" value="NM_001395208.2"/>
</dbReference>
<dbReference type="RefSeq" id="XP_011518936.1">
    <property type="nucleotide sequence ID" value="XM_011520634.2"/>
</dbReference>
<dbReference type="RefSeq" id="XP_047284731.1">
    <property type="nucleotide sequence ID" value="XM_047428775.1"/>
</dbReference>
<dbReference type="RefSeq" id="XP_054227909.1">
    <property type="nucleotide sequence ID" value="XM_054371934.1"/>
</dbReference>
<dbReference type="BioGRID" id="131128">
    <property type="interactions" value="2"/>
</dbReference>
<dbReference type="STRING" id="9606.ENSP00000387617"/>
<dbReference type="GlyGen" id="A6NFE2">
    <property type="glycosylation" value="1 site, 1 O-linked glycan (1 site)"/>
</dbReference>
<dbReference type="iPTMnet" id="A6NFE2"/>
<dbReference type="PhosphoSitePlus" id="A6NFE2"/>
<dbReference type="BioMuta" id="SMCO2"/>
<dbReference type="jPOST" id="A6NFE2"/>
<dbReference type="MassIVE" id="A6NFE2"/>
<dbReference type="PaxDb" id="9606-ENSP00000387617"/>
<dbReference type="PeptideAtlas" id="A6NFE2"/>
<dbReference type="ProteomicsDB" id="1045"/>
<dbReference type="Pumba" id="A6NFE2"/>
<dbReference type="Antibodypedia" id="2577">
    <property type="antibodies" value="15 antibodies from 8 providers"/>
</dbReference>
<dbReference type="DNASU" id="341346"/>
<dbReference type="Ensembl" id="ENST00000535986.2">
    <property type="protein sequence ID" value="ENSP00000441688.1"/>
    <property type="gene ID" value="ENSG00000165935.10"/>
</dbReference>
<dbReference type="GeneID" id="341346"/>
<dbReference type="KEGG" id="hsa:341346"/>
<dbReference type="MANE-Select" id="ENST00000535986.2">
    <property type="protein sequence ID" value="ENSP00000441688.1"/>
    <property type="RefSeq nucleotide sequence ID" value="NM_001395208.2"/>
    <property type="RefSeq protein sequence ID" value="NP_001382137.1"/>
</dbReference>
<dbReference type="UCSC" id="uc010sjq.2">
    <property type="organism name" value="human"/>
</dbReference>
<dbReference type="AGR" id="HGNC:34448"/>
<dbReference type="CTD" id="341346"/>
<dbReference type="DisGeNET" id="341346"/>
<dbReference type="GeneCards" id="SMCO2"/>
<dbReference type="HGNC" id="HGNC:34448">
    <property type="gene designation" value="SMCO2"/>
</dbReference>
<dbReference type="HPA" id="ENSG00000165935">
    <property type="expression patterns" value="Not detected"/>
</dbReference>
<dbReference type="neXtProt" id="NX_A6NFE2"/>
<dbReference type="OpenTargets" id="ENSG00000165935"/>
<dbReference type="VEuPathDB" id="HostDB:ENSG00000165935"/>
<dbReference type="eggNOG" id="ENOG502RNQM">
    <property type="taxonomic scope" value="Eukaryota"/>
</dbReference>
<dbReference type="GeneTree" id="ENSGT00940000153380"/>
<dbReference type="HOGENOM" id="CLU_067010_0_0_1"/>
<dbReference type="InParanoid" id="A6NFE2"/>
<dbReference type="OMA" id="GADHIGW"/>
<dbReference type="OrthoDB" id="9835655at2759"/>
<dbReference type="PAN-GO" id="A6NFE2">
    <property type="GO annotations" value="0 GO annotations based on evolutionary models"/>
</dbReference>
<dbReference type="PhylomeDB" id="A6NFE2"/>
<dbReference type="TreeFam" id="TF338250"/>
<dbReference type="PathwayCommons" id="A6NFE2"/>
<dbReference type="SignaLink" id="A6NFE2"/>
<dbReference type="BioGRID-ORCS" id="341346">
    <property type="hits" value="14 hits in 1147 CRISPR screens"/>
</dbReference>
<dbReference type="ChiTaRS" id="SMCO2">
    <property type="organism name" value="human"/>
</dbReference>
<dbReference type="GenomeRNAi" id="341346"/>
<dbReference type="Pharos" id="A6NFE2">
    <property type="development level" value="Tdark"/>
</dbReference>
<dbReference type="PRO" id="PR:A6NFE2"/>
<dbReference type="Proteomes" id="UP000005640">
    <property type="component" value="Chromosome 12"/>
</dbReference>
<dbReference type="RNAct" id="A6NFE2">
    <property type="molecule type" value="protein"/>
</dbReference>
<dbReference type="Bgee" id="ENSG00000165935">
    <property type="expression patterns" value="Expressed in male germ line stem cell (sensu Vertebrata) in testis and 86 other cell types or tissues"/>
</dbReference>
<dbReference type="ExpressionAtlas" id="A6NFE2">
    <property type="expression patterns" value="baseline and differential"/>
</dbReference>
<dbReference type="GO" id="GO:0016020">
    <property type="term" value="C:membrane"/>
    <property type="evidence" value="ECO:0007669"/>
    <property type="project" value="UniProtKB-SubCell"/>
</dbReference>
<dbReference type="InterPro" id="IPR026617">
    <property type="entry name" value="SMCO2/5"/>
</dbReference>
<dbReference type="PANTHER" id="PTHR22422:SF5">
    <property type="entry name" value="SINGLE-PASS MEMBRANE AND COILED-COIL DOMAIN-CONTAINING PROTEIN 2"/>
    <property type="match status" value="1"/>
</dbReference>
<dbReference type="PANTHER" id="PTHR22422">
    <property type="entry name" value="TRANSMEMBRANE AND COILED-COIL DOMAIN-CONTAINING PROTEIN 5B-RELATED"/>
    <property type="match status" value="1"/>
</dbReference>
<gene>
    <name type="primary">SMCO2</name>
    <name type="synonym">C12orf70</name>
</gene>
<accession>A6NFE2</accession>
<organism>
    <name type="scientific">Homo sapiens</name>
    <name type="common">Human</name>
    <dbReference type="NCBI Taxonomy" id="9606"/>
    <lineage>
        <taxon>Eukaryota</taxon>
        <taxon>Metazoa</taxon>
        <taxon>Chordata</taxon>
        <taxon>Craniata</taxon>
        <taxon>Vertebrata</taxon>
        <taxon>Euteleostomi</taxon>
        <taxon>Mammalia</taxon>
        <taxon>Eutheria</taxon>
        <taxon>Euarchontoglires</taxon>
        <taxon>Primates</taxon>
        <taxon>Haplorrhini</taxon>
        <taxon>Catarrhini</taxon>
        <taxon>Hominidae</taxon>
        <taxon>Homo</taxon>
    </lineage>
</organism>